<dbReference type="EC" id="5.4.2.11" evidence="1"/>
<dbReference type="EMBL" id="AE008922">
    <property type="protein sequence ID" value="AAM41984.1"/>
    <property type="molecule type" value="Genomic_DNA"/>
</dbReference>
<dbReference type="RefSeq" id="NP_638060.1">
    <property type="nucleotide sequence ID" value="NC_003902.1"/>
</dbReference>
<dbReference type="RefSeq" id="WP_011037842.1">
    <property type="nucleotide sequence ID" value="NC_003902.1"/>
</dbReference>
<dbReference type="SMR" id="Q8P7A1"/>
<dbReference type="STRING" id="190485.XCC2712"/>
<dbReference type="EnsemblBacteria" id="AAM41984">
    <property type="protein sequence ID" value="AAM41984"/>
    <property type="gene ID" value="XCC2712"/>
</dbReference>
<dbReference type="KEGG" id="xcc:XCC2712"/>
<dbReference type="PATRIC" id="fig|190485.4.peg.2894"/>
<dbReference type="eggNOG" id="COG0588">
    <property type="taxonomic scope" value="Bacteria"/>
</dbReference>
<dbReference type="HOGENOM" id="CLU_033323_1_1_6"/>
<dbReference type="OrthoDB" id="9781415at2"/>
<dbReference type="UniPathway" id="UPA00109">
    <property type="reaction ID" value="UER00186"/>
</dbReference>
<dbReference type="Proteomes" id="UP000001010">
    <property type="component" value="Chromosome"/>
</dbReference>
<dbReference type="GO" id="GO:0004619">
    <property type="term" value="F:phosphoglycerate mutase activity"/>
    <property type="evidence" value="ECO:0007669"/>
    <property type="project" value="UniProtKB-EC"/>
</dbReference>
<dbReference type="GO" id="GO:0006094">
    <property type="term" value="P:gluconeogenesis"/>
    <property type="evidence" value="ECO:0007669"/>
    <property type="project" value="UniProtKB-UniRule"/>
</dbReference>
<dbReference type="GO" id="GO:0006096">
    <property type="term" value="P:glycolytic process"/>
    <property type="evidence" value="ECO:0007669"/>
    <property type="project" value="UniProtKB-UniRule"/>
</dbReference>
<dbReference type="CDD" id="cd07067">
    <property type="entry name" value="HP_PGM_like"/>
    <property type="match status" value="1"/>
</dbReference>
<dbReference type="FunFam" id="3.40.50.1240:FF:000003">
    <property type="entry name" value="2,3-bisphosphoglycerate-dependent phosphoglycerate mutase"/>
    <property type="match status" value="1"/>
</dbReference>
<dbReference type="Gene3D" id="3.40.50.1240">
    <property type="entry name" value="Phosphoglycerate mutase-like"/>
    <property type="match status" value="1"/>
</dbReference>
<dbReference type="HAMAP" id="MF_01039">
    <property type="entry name" value="PGAM_GpmA"/>
    <property type="match status" value="1"/>
</dbReference>
<dbReference type="InterPro" id="IPR013078">
    <property type="entry name" value="His_Pase_superF_clade-1"/>
</dbReference>
<dbReference type="InterPro" id="IPR029033">
    <property type="entry name" value="His_PPase_superfam"/>
</dbReference>
<dbReference type="InterPro" id="IPR001345">
    <property type="entry name" value="PG/BPGM_mutase_AS"/>
</dbReference>
<dbReference type="InterPro" id="IPR005952">
    <property type="entry name" value="Phosphogly_mut1"/>
</dbReference>
<dbReference type="NCBIfam" id="TIGR01258">
    <property type="entry name" value="pgm_1"/>
    <property type="match status" value="1"/>
</dbReference>
<dbReference type="NCBIfam" id="NF010713">
    <property type="entry name" value="PRK14115.1"/>
    <property type="match status" value="1"/>
</dbReference>
<dbReference type="PANTHER" id="PTHR11931">
    <property type="entry name" value="PHOSPHOGLYCERATE MUTASE"/>
    <property type="match status" value="1"/>
</dbReference>
<dbReference type="Pfam" id="PF00300">
    <property type="entry name" value="His_Phos_1"/>
    <property type="match status" value="2"/>
</dbReference>
<dbReference type="PIRSF" id="PIRSF000709">
    <property type="entry name" value="6PFK_2-Ptase"/>
    <property type="match status" value="1"/>
</dbReference>
<dbReference type="SMART" id="SM00855">
    <property type="entry name" value="PGAM"/>
    <property type="match status" value="1"/>
</dbReference>
<dbReference type="SUPFAM" id="SSF53254">
    <property type="entry name" value="Phosphoglycerate mutase-like"/>
    <property type="match status" value="1"/>
</dbReference>
<dbReference type="PROSITE" id="PS00175">
    <property type="entry name" value="PG_MUTASE"/>
    <property type="match status" value="1"/>
</dbReference>
<organism>
    <name type="scientific">Xanthomonas campestris pv. campestris (strain ATCC 33913 / DSM 3586 / NCPPB 528 / LMG 568 / P 25)</name>
    <dbReference type="NCBI Taxonomy" id="190485"/>
    <lineage>
        <taxon>Bacteria</taxon>
        <taxon>Pseudomonadati</taxon>
        <taxon>Pseudomonadota</taxon>
        <taxon>Gammaproteobacteria</taxon>
        <taxon>Lysobacterales</taxon>
        <taxon>Lysobacteraceae</taxon>
        <taxon>Xanthomonas</taxon>
    </lineage>
</organism>
<reference key="1">
    <citation type="journal article" date="2002" name="Nature">
        <title>Comparison of the genomes of two Xanthomonas pathogens with differing host specificities.</title>
        <authorList>
            <person name="da Silva A.C.R."/>
            <person name="Ferro J.A."/>
            <person name="Reinach F.C."/>
            <person name="Farah C.S."/>
            <person name="Furlan L.R."/>
            <person name="Quaggio R.B."/>
            <person name="Monteiro-Vitorello C.B."/>
            <person name="Van Sluys M.A."/>
            <person name="Almeida N.F. Jr."/>
            <person name="Alves L.M.C."/>
            <person name="do Amaral A.M."/>
            <person name="Bertolini M.C."/>
            <person name="Camargo L.E.A."/>
            <person name="Camarotte G."/>
            <person name="Cannavan F."/>
            <person name="Cardozo J."/>
            <person name="Chambergo F."/>
            <person name="Ciapina L.P."/>
            <person name="Cicarelli R.M.B."/>
            <person name="Coutinho L.L."/>
            <person name="Cursino-Santos J.R."/>
            <person name="El-Dorry H."/>
            <person name="Faria J.B."/>
            <person name="Ferreira A.J.S."/>
            <person name="Ferreira R.C.C."/>
            <person name="Ferro M.I.T."/>
            <person name="Formighieri E.F."/>
            <person name="Franco M.C."/>
            <person name="Greggio C.C."/>
            <person name="Gruber A."/>
            <person name="Katsuyama A.M."/>
            <person name="Kishi L.T."/>
            <person name="Leite R.P."/>
            <person name="Lemos E.G.M."/>
            <person name="Lemos M.V.F."/>
            <person name="Locali E.C."/>
            <person name="Machado M.A."/>
            <person name="Madeira A.M.B.N."/>
            <person name="Martinez-Rossi N.M."/>
            <person name="Martins E.C."/>
            <person name="Meidanis J."/>
            <person name="Menck C.F.M."/>
            <person name="Miyaki C.Y."/>
            <person name="Moon D.H."/>
            <person name="Moreira L.M."/>
            <person name="Novo M.T.M."/>
            <person name="Okura V.K."/>
            <person name="Oliveira M.C."/>
            <person name="Oliveira V.R."/>
            <person name="Pereira H.A."/>
            <person name="Rossi A."/>
            <person name="Sena J.A.D."/>
            <person name="Silva C."/>
            <person name="de Souza R.F."/>
            <person name="Spinola L.A.F."/>
            <person name="Takita M.A."/>
            <person name="Tamura R.E."/>
            <person name="Teixeira E.C."/>
            <person name="Tezza R.I.D."/>
            <person name="Trindade dos Santos M."/>
            <person name="Truffi D."/>
            <person name="Tsai S.M."/>
            <person name="White F.F."/>
            <person name="Setubal J.C."/>
            <person name="Kitajima J.P."/>
        </authorList>
    </citation>
    <scope>NUCLEOTIDE SEQUENCE [LARGE SCALE GENOMIC DNA]</scope>
    <source>
        <strain>ATCC 33913 / DSM 3586 / NCPPB 528 / LMG 568 / P 25</strain>
    </source>
</reference>
<protein>
    <recommendedName>
        <fullName evidence="1">2,3-bisphosphoglycerate-dependent phosphoglycerate mutase</fullName>
        <shortName evidence="1">BPG-dependent PGAM</shortName>
        <shortName evidence="1">PGAM</shortName>
        <shortName evidence="1">Phosphoglyceromutase</shortName>
        <shortName evidence="1">dPGM</shortName>
        <ecNumber evidence="1">5.4.2.11</ecNumber>
    </recommendedName>
</protein>
<evidence type="ECO:0000255" key="1">
    <source>
        <dbReference type="HAMAP-Rule" id="MF_01039"/>
    </source>
</evidence>
<feature type="chain" id="PRO_0000179939" description="2,3-bisphosphoglycerate-dependent phosphoglycerate mutase">
    <location>
        <begin position="1"/>
        <end position="249"/>
    </location>
</feature>
<feature type="active site" description="Tele-phosphohistidine intermediate" evidence="1">
    <location>
        <position position="10"/>
    </location>
</feature>
<feature type="active site" description="Proton donor/acceptor" evidence="1">
    <location>
        <position position="88"/>
    </location>
</feature>
<feature type="binding site" evidence="1">
    <location>
        <begin position="9"/>
        <end position="16"/>
    </location>
    <ligand>
        <name>substrate</name>
    </ligand>
</feature>
<feature type="binding site" evidence="1">
    <location>
        <begin position="22"/>
        <end position="23"/>
    </location>
    <ligand>
        <name>substrate</name>
    </ligand>
</feature>
<feature type="binding site" evidence="1">
    <location>
        <position position="61"/>
    </location>
    <ligand>
        <name>substrate</name>
    </ligand>
</feature>
<feature type="binding site" evidence="1">
    <location>
        <begin position="88"/>
        <end position="91"/>
    </location>
    <ligand>
        <name>substrate</name>
    </ligand>
</feature>
<feature type="binding site" evidence="1">
    <location>
        <position position="99"/>
    </location>
    <ligand>
        <name>substrate</name>
    </ligand>
</feature>
<feature type="binding site" evidence="1">
    <location>
        <begin position="115"/>
        <end position="116"/>
    </location>
    <ligand>
        <name>substrate</name>
    </ligand>
</feature>
<feature type="binding site" evidence="1">
    <location>
        <begin position="184"/>
        <end position="185"/>
    </location>
    <ligand>
        <name>substrate</name>
    </ligand>
</feature>
<feature type="site" description="Transition state stabilizer" evidence="1">
    <location>
        <position position="183"/>
    </location>
</feature>
<proteinExistence type="inferred from homology"/>
<sequence>MTRKLVLLRHGQSQWNLDNRFTGWVDVDLTEQGRQEAAAAGKLMKDEGLQFDVAYTSVLKRAIHTLQGALKELDQDWLPVHKSWRLNERHYGGLQGLDKAETAAKHGEEQVKIWRRSYDIPPPAMDVTDPGHPGHDRRYATLDRNALPGTESLATTLVRVLPYWHDAIAPQLKAGQTVLVTAHGNSLRALYKYLNDISNAQILELNIPTGIPLLFELDDNLQVQSYRYLGDPEAAKRAAEAVANQGKAK</sequence>
<name>GPMA_XANCP</name>
<accession>Q8P7A1</accession>
<gene>
    <name evidence="1" type="primary">gpmA</name>
    <name type="synonym">gpm</name>
    <name type="ordered locus">XCC2712</name>
</gene>
<keyword id="KW-0312">Gluconeogenesis</keyword>
<keyword id="KW-0324">Glycolysis</keyword>
<keyword id="KW-0413">Isomerase</keyword>
<keyword id="KW-1185">Reference proteome</keyword>
<comment type="function">
    <text evidence="1">Catalyzes the interconversion of 2-phosphoglycerate and 3-phosphoglycerate.</text>
</comment>
<comment type="catalytic activity">
    <reaction evidence="1">
        <text>(2R)-2-phosphoglycerate = (2R)-3-phosphoglycerate</text>
        <dbReference type="Rhea" id="RHEA:15901"/>
        <dbReference type="ChEBI" id="CHEBI:58272"/>
        <dbReference type="ChEBI" id="CHEBI:58289"/>
        <dbReference type="EC" id="5.4.2.11"/>
    </reaction>
</comment>
<comment type="pathway">
    <text evidence="1">Carbohydrate degradation; glycolysis; pyruvate from D-glyceraldehyde 3-phosphate: step 3/5.</text>
</comment>
<comment type="subunit">
    <text evidence="1">Homodimer.</text>
</comment>
<comment type="similarity">
    <text evidence="1">Belongs to the phosphoglycerate mutase family. BPG-dependent PGAM subfamily.</text>
</comment>